<proteinExistence type="inferred from homology"/>
<dbReference type="EMBL" id="AE016877">
    <property type="protein sequence ID" value="AAP07288.1"/>
    <property type="molecule type" value="Genomic_DNA"/>
</dbReference>
<dbReference type="RefSeq" id="NP_830087.1">
    <property type="nucleotide sequence ID" value="NC_004722.1"/>
</dbReference>
<dbReference type="RefSeq" id="WP_000353544.1">
    <property type="nucleotide sequence ID" value="NZ_CP138336.1"/>
</dbReference>
<dbReference type="SMR" id="Q81IX5"/>
<dbReference type="STRING" id="226900.BC_0219"/>
<dbReference type="DNASU" id="1202572"/>
<dbReference type="KEGG" id="bce:BC0219"/>
<dbReference type="PATRIC" id="fig|226900.8.peg.213"/>
<dbReference type="HOGENOM" id="CLU_076024_0_0_9"/>
<dbReference type="OrthoDB" id="1452595at2"/>
<dbReference type="Proteomes" id="UP000001417">
    <property type="component" value="Chromosome"/>
</dbReference>
<dbReference type="GO" id="GO:0005886">
    <property type="term" value="C:plasma membrane"/>
    <property type="evidence" value="ECO:0007669"/>
    <property type="project" value="UniProtKB-SubCell"/>
</dbReference>
<dbReference type="GO" id="GO:0015144">
    <property type="term" value="F:carbohydrate transmembrane transporter activity"/>
    <property type="evidence" value="ECO:0007669"/>
    <property type="project" value="InterPro"/>
</dbReference>
<dbReference type="CDD" id="cd23112">
    <property type="entry name" value="glucose_uptake_GlcU"/>
    <property type="match status" value="1"/>
</dbReference>
<dbReference type="Gene3D" id="1.10.3730.20">
    <property type="match status" value="1"/>
</dbReference>
<dbReference type="InterPro" id="IPR010651">
    <property type="entry name" value="Sugar_transport"/>
</dbReference>
<dbReference type="PANTHER" id="PTHR16119">
    <property type="entry name" value="TRANSMEMBRANE PROTEIN 144"/>
    <property type="match status" value="1"/>
</dbReference>
<dbReference type="PANTHER" id="PTHR16119:SF17">
    <property type="entry name" value="TRANSMEMBRANE PROTEIN 144"/>
    <property type="match status" value="1"/>
</dbReference>
<dbReference type="Pfam" id="PF06800">
    <property type="entry name" value="Sugar_transport"/>
    <property type="match status" value="1"/>
</dbReference>
<dbReference type="SUPFAM" id="SSF103481">
    <property type="entry name" value="Multidrug resistance efflux transporter EmrE"/>
    <property type="match status" value="2"/>
</dbReference>
<keyword id="KW-1003">Cell membrane</keyword>
<keyword id="KW-0472">Membrane</keyword>
<keyword id="KW-1185">Reference proteome</keyword>
<keyword id="KW-0762">Sugar transport</keyword>
<keyword id="KW-0812">Transmembrane</keyword>
<keyword id="KW-1133">Transmembrane helix</keyword>
<keyword id="KW-0813">Transport</keyword>
<organism>
    <name type="scientific">Bacillus cereus (strain ATCC 14579 / DSM 31 / CCUG 7414 / JCM 2152 / NBRC 15305 / NCIMB 9373 / NCTC 2599 / NRRL B-3711)</name>
    <dbReference type="NCBI Taxonomy" id="226900"/>
    <lineage>
        <taxon>Bacteria</taxon>
        <taxon>Bacillati</taxon>
        <taxon>Bacillota</taxon>
        <taxon>Bacilli</taxon>
        <taxon>Bacillales</taxon>
        <taxon>Bacillaceae</taxon>
        <taxon>Bacillus</taxon>
        <taxon>Bacillus cereus group</taxon>
    </lineage>
</organism>
<feature type="chain" id="PRO_0000213647" description="Putative sugar uptake protein BC_0219">
    <location>
        <begin position="1"/>
        <end position="283"/>
    </location>
</feature>
<feature type="transmembrane region" description="Helical" evidence="1">
    <location>
        <begin position="4"/>
        <end position="21"/>
    </location>
</feature>
<feature type="transmembrane region" description="Helical" evidence="1">
    <location>
        <begin position="26"/>
        <end position="48"/>
    </location>
</feature>
<feature type="transmembrane region" description="Helical" evidence="1">
    <location>
        <begin position="52"/>
        <end position="71"/>
    </location>
</feature>
<feature type="transmembrane region" description="Helical" evidence="1">
    <location>
        <begin position="84"/>
        <end position="106"/>
    </location>
</feature>
<feature type="transmembrane region" description="Helical" evidence="1">
    <location>
        <begin position="110"/>
        <end position="132"/>
    </location>
</feature>
<feature type="transmembrane region" description="Helical" evidence="1">
    <location>
        <begin position="151"/>
        <end position="173"/>
    </location>
</feature>
<feature type="transmembrane region" description="Helical" evidence="1">
    <location>
        <begin position="178"/>
        <end position="195"/>
    </location>
</feature>
<feature type="transmembrane region" description="Helical" evidence="1">
    <location>
        <begin position="208"/>
        <end position="230"/>
    </location>
</feature>
<feature type="transmembrane region" description="Helical" evidence="1">
    <location>
        <begin position="234"/>
        <end position="253"/>
    </location>
</feature>
<feature type="transmembrane region" description="Helical" evidence="1">
    <location>
        <begin position="260"/>
        <end position="279"/>
    </location>
</feature>
<comment type="subcellular location">
    <subcellularLocation>
        <location evidence="2">Cell membrane</location>
        <topology evidence="2">Multi-pass membrane protein</topology>
    </subcellularLocation>
</comment>
<comment type="similarity">
    <text evidence="2">Belongs to the GRP transporter (TC 2.A.7.5) family.</text>
</comment>
<evidence type="ECO:0000255" key="1"/>
<evidence type="ECO:0000305" key="2"/>
<gene>
    <name type="ordered locus">BC_0219</name>
</gene>
<sequence>MDILLALLPAIAWGNILLVSVKMGGGAYSQTVGMTIGALFFATIMYVFTQPALTMTILIVGFISGLFWALGQVNQLKTVEKLGVSTTVTISTGMQLVATSIFGVIAFREWTTTTTIILGTIAILLIVVGVVFTSLDDKENAQPPGQLKKGLLTLIVSTFGYLVYVIIIRWYNIDGWSAILPQAVGMFVGAVVLTSKHKPFNKYAIRNALSGLLWGTGNLFLLLSLPRVGVATSFPLSQTGIVISTFGAIVFLGEKKTKRQLIFIALGSVLIIGGAVLLGMTKA</sequence>
<reference key="1">
    <citation type="journal article" date="2003" name="Nature">
        <title>Genome sequence of Bacillus cereus and comparative analysis with Bacillus anthracis.</title>
        <authorList>
            <person name="Ivanova N."/>
            <person name="Sorokin A."/>
            <person name="Anderson I."/>
            <person name="Galleron N."/>
            <person name="Candelon B."/>
            <person name="Kapatral V."/>
            <person name="Bhattacharyya A."/>
            <person name="Reznik G."/>
            <person name="Mikhailova N."/>
            <person name="Lapidus A."/>
            <person name="Chu L."/>
            <person name="Mazur M."/>
            <person name="Goltsman E."/>
            <person name="Larsen N."/>
            <person name="D'Souza M."/>
            <person name="Walunas T."/>
            <person name="Grechkin Y."/>
            <person name="Pusch G."/>
            <person name="Haselkorn R."/>
            <person name="Fonstein M."/>
            <person name="Ehrlich S.D."/>
            <person name="Overbeek R."/>
            <person name="Kyrpides N.C."/>
        </authorList>
    </citation>
    <scope>NUCLEOTIDE SEQUENCE [LARGE SCALE GENOMIC DNA]</scope>
    <source>
        <strain>ATCC 14579 / DSM 31 / CCUG 7414 / JCM 2152 / NBRC 15305 / NCIMB 9373 / NCTC 2599 / NRRL B-3711</strain>
    </source>
</reference>
<protein>
    <recommendedName>
        <fullName>Putative sugar uptake protein BC_0219</fullName>
    </recommendedName>
</protein>
<name>Y219_BACCR</name>
<accession>Q81IX5</accession>